<dbReference type="EMBL" id="AF181251">
    <property type="protein sequence ID" value="AAG02141.1"/>
    <property type="molecule type" value="Genomic_DNA"/>
</dbReference>
<dbReference type="RefSeq" id="NP_001007685.1">
    <property type="nucleotide sequence ID" value="NM_001007684.2"/>
</dbReference>
<dbReference type="SMR" id="Q9ET58"/>
<dbReference type="FunCoup" id="Q9ET58">
    <property type="interactions" value="85"/>
</dbReference>
<dbReference type="STRING" id="10116.ENSRNOP00000019052"/>
<dbReference type="GlyGen" id="Q9ET58">
    <property type="glycosylation" value="1 site"/>
</dbReference>
<dbReference type="iPTMnet" id="Q9ET58"/>
<dbReference type="PhosphoSitePlus" id="Q9ET58"/>
<dbReference type="PaxDb" id="10116-ENSRNOP00000019052"/>
<dbReference type="Ensembl" id="ENSRNOT00000112398.1">
    <property type="protein sequence ID" value="ENSRNOP00000083422.1"/>
    <property type="gene ID" value="ENSRNOG00000067705.1"/>
</dbReference>
<dbReference type="GeneID" id="306330"/>
<dbReference type="KEGG" id="rno:306330"/>
<dbReference type="UCSC" id="RGD:1359220">
    <property type="organism name" value="rat"/>
</dbReference>
<dbReference type="AGR" id="RGD:1359220"/>
<dbReference type="CTD" id="10365"/>
<dbReference type="RGD" id="1359220">
    <property type="gene designation" value="Klf2"/>
</dbReference>
<dbReference type="eggNOG" id="KOG1721">
    <property type="taxonomic scope" value="Eukaryota"/>
</dbReference>
<dbReference type="GeneTree" id="ENSGT00940000163163"/>
<dbReference type="HOGENOM" id="CLU_002678_33_1_1"/>
<dbReference type="InParanoid" id="Q9ET58"/>
<dbReference type="OMA" id="DCHTQMM"/>
<dbReference type="OrthoDB" id="4748970at2759"/>
<dbReference type="PhylomeDB" id="Q9ET58"/>
<dbReference type="TreeFam" id="TF350556"/>
<dbReference type="PRO" id="PR:Q9ET58"/>
<dbReference type="Proteomes" id="UP000002494">
    <property type="component" value="Chromosome 16"/>
</dbReference>
<dbReference type="Bgee" id="ENSRNOG00000014205">
    <property type="expression patterns" value="Expressed in lung and 19 other cell types or tissues"/>
</dbReference>
<dbReference type="GO" id="GO:0000785">
    <property type="term" value="C:chromatin"/>
    <property type="evidence" value="ECO:0000266"/>
    <property type="project" value="RGD"/>
</dbReference>
<dbReference type="GO" id="GO:0005634">
    <property type="term" value="C:nucleus"/>
    <property type="evidence" value="ECO:0000266"/>
    <property type="project" value="RGD"/>
</dbReference>
<dbReference type="GO" id="GO:0003677">
    <property type="term" value="F:DNA binding"/>
    <property type="evidence" value="ECO:0000266"/>
    <property type="project" value="RGD"/>
</dbReference>
<dbReference type="GO" id="GO:0003700">
    <property type="term" value="F:DNA-binding transcription factor activity"/>
    <property type="evidence" value="ECO:0000250"/>
    <property type="project" value="UniProtKB"/>
</dbReference>
<dbReference type="GO" id="GO:0000981">
    <property type="term" value="F:DNA-binding transcription factor activity, RNA polymerase II-specific"/>
    <property type="evidence" value="ECO:0000266"/>
    <property type="project" value="RGD"/>
</dbReference>
<dbReference type="GO" id="GO:0000978">
    <property type="term" value="F:RNA polymerase II cis-regulatory region sequence-specific DNA binding"/>
    <property type="evidence" value="ECO:0000318"/>
    <property type="project" value="GO_Central"/>
</dbReference>
<dbReference type="GO" id="GO:1990837">
    <property type="term" value="F:sequence-specific double-stranded DNA binding"/>
    <property type="evidence" value="ECO:0000266"/>
    <property type="project" value="RGD"/>
</dbReference>
<dbReference type="GO" id="GO:0008270">
    <property type="term" value="F:zinc ion binding"/>
    <property type="evidence" value="ECO:0007669"/>
    <property type="project" value="UniProtKB-KW"/>
</dbReference>
<dbReference type="GO" id="GO:0000902">
    <property type="term" value="P:cell morphogenesis"/>
    <property type="evidence" value="ECO:0000266"/>
    <property type="project" value="RGD"/>
</dbReference>
<dbReference type="GO" id="GO:1990859">
    <property type="term" value="P:cellular response to endothelin"/>
    <property type="evidence" value="ECO:0000270"/>
    <property type="project" value="RGD"/>
</dbReference>
<dbReference type="GO" id="GO:0071498">
    <property type="term" value="P:cellular response to fluid shear stress"/>
    <property type="evidence" value="ECO:0000266"/>
    <property type="project" value="RGD"/>
</dbReference>
<dbReference type="GO" id="GO:0070301">
    <property type="term" value="P:cellular response to hydrogen peroxide"/>
    <property type="evidence" value="ECO:0000270"/>
    <property type="project" value="RGD"/>
</dbReference>
<dbReference type="GO" id="GO:0071347">
    <property type="term" value="P:cellular response to interleukin-1"/>
    <property type="evidence" value="ECO:0000270"/>
    <property type="project" value="RGD"/>
</dbReference>
<dbReference type="GO" id="GO:0071499">
    <property type="term" value="P:cellular response to laminar fluid shear stress"/>
    <property type="evidence" value="ECO:0000266"/>
    <property type="project" value="RGD"/>
</dbReference>
<dbReference type="GO" id="GO:0071356">
    <property type="term" value="P:cellular response to tumor necrosis factor"/>
    <property type="evidence" value="ECO:0000270"/>
    <property type="project" value="RGD"/>
</dbReference>
<dbReference type="GO" id="GO:0097533">
    <property type="term" value="P:cellular stress response to acid chemical"/>
    <property type="evidence" value="ECO:0000266"/>
    <property type="project" value="RGD"/>
</dbReference>
<dbReference type="GO" id="GO:0040029">
    <property type="term" value="P:epigenetic regulation of gene expression"/>
    <property type="evidence" value="ECO:0000266"/>
    <property type="project" value="RGD"/>
</dbReference>
<dbReference type="GO" id="GO:0034101">
    <property type="term" value="P:erythrocyte homeostasis"/>
    <property type="evidence" value="ECO:0000266"/>
    <property type="project" value="RGD"/>
</dbReference>
<dbReference type="GO" id="GO:0043249">
    <property type="term" value="P:erythrocyte maturation"/>
    <property type="evidence" value="ECO:0000266"/>
    <property type="project" value="RGD"/>
</dbReference>
<dbReference type="GO" id="GO:0001701">
    <property type="term" value="P:in utero embryonic development"/>
    <property type="evidence" value="ECO:0000266"/>
    <property type="project" value="RGD"/>
</dbReference>
<dbReference type="GO" id="GO:0035264">
    <property type="term" value="P:multicellular organism growth"/>
    <property type="evidence" value="ECO:0000266"/>
    <property type="project" value="RGD"/>
</dbReference>
<dbReference type="GO" id="GO:0032715">
    <property type="term" value="P:negative regulation of interleukin-6 production"/>
    <property type="evidence" value="ECO:0000315"/>
    <property type="project" value="RGD"/>
</dbReference>
<dbReference type="GO" id="GO:1903671">
    <property type="term" value="P:negative regulation of sprouting angiogenesis"/>
    <property type="evidence" value="ECO:0000266"/>
    <property type="project" value="RGD"/>
</dbReference>
<dbReference type="GO" id="GO:0000122">
    <property type="term" value="P:negative regulation of transcription by RNA polymerase II"/>
    <property type="evidence" value="ECO:0000266"/>
    <property type="project" value="RGD"/>
</dbReference>
<dbReference type="GO" id="GO:0045893">
    <property type="term" value="P:positive regulation of DNA-templated transcription"/>
    <property type="evidence" value="ECO:0000315"/>
    <property type="project" value="RGD"/>
</dbReference>
<dbReference type="GO" id="GO:0045429">
    <property type="term" value="P:positive regulation of nitric oxide biosynthetic process"/>
    <property type="evidence" value="ECO:0000266"/>
    <property type="project" value="RGD"/>
</dbReference>
<dbReference type="GO" id="GO:0051247">
    <property type="term" value="P:positive regulation of protein metabolic process"/>
    <property type="evidence" value="ECO:0000266"/>
    <property type="project" value="RGD"/>
</dbReference>
<dbReference type="GO" id="GO:0048386">
    <property type="term" value="P:positive regulation of retinoic acid receptor signaling pathway"/>
    <property type="evidence" value="ECO:0000266"/>
    <property type="project" value="RGD"/>
</dbReference>
<dbReference type="GO" id="GO:0045944">
    <property type="term" value="P:positive regulation of transcription by RNA polymerase II"/>
    <property type="evidence" value="ECO:0000266"/>
    <property type="project" value="RGD"/>
</dbReference>
<dbReference type="GO" id="GO:0006357">
    <property type="term" value="P:regulation of transcription by RNA polymerase II"/>
    <property type="evidence" value="ECO:0000318"/>
    <property type="project" value="GO_Central"/>
</dbReference>
<dbReference type="GO" id="GO:0034616">
    <property type="term" value="P:response to laminar fluid shear stress"/>
    <property type="evidence" value="ECO:0000270"/>
    <property type="project" value="RGD"/>
</dbReference>
<dbReference type="GO" id="GO:0060509">
    <property type="term" value="P:type I pneumocyte differentiation"/>
    <property type="evidence" value="ECO:0000266"/>
    <property type="project" value="RGD"/>
</dbReference>
<dbReference type="GO" id="GO:0042311">
    <property type="term" value="P:vasodilation"/>
    <property type="evidence" value="ECO:0000266"/>
    <property type="project" value="RGD"/>
</dbReference>
<dbReference type="CDD" id="cd21583">
    <property type="entry name" value="KLF2_N"/>
    <property type="match status" value="1"/>
</dbReference>
<dbReference type="FunFam" id="3.30.160.60:FF:000018">
    <property type="entry name" value="Krueppel-like factor 15"/>
    <property type="match status" value="1"/>
</dbReference>
<dbReference type="FunFam" id="3.30.160.60:FF:000237">
    <property type="entry name" value="Krueppel-like factor 2"/>
    <property type="match status" value="1"/>
</dbReference>
<dbReference type="FunFam" id="3.30.160.60:FF:001156">
    <property type="entry name" value="Zinc finger protein 407"/>
    <property type="match status" value="1"/>
</dbReference>
<dbReference type="Gene3D" id="3.30.160.60">
    <property type="entry name" value="Classic Zinc Finger"/>
    <property type="match status" value="3"/>
</dbReference>
<dbReference type="InterPro" id="IPR036236">
    <property type="entry name" value="Znf_C2H2_sf"/>
</dbReference>
<dbReference type="InterPro" id="IPR013087">
    <property type="entry name" value="Znf_C2H2_type"/>
</dbReference>
<dbReference type="PANTHER" id="PTHR23235:SF109">
    <property type="entry name" value="KRUEPPEL-LIKE FACTOR 2"/>
    <property type="match status" value="1"/>
</dbReference>
<dbReference type="PANTHER" id="PTHR23235">
    <property type="entry name" value="KRUEPPEL-LIKE TRANSCRIPTION FACTOR"/>
    <property type="match status" value="1"/>
</dbReference>
<dbReference type="Pfam" id="PF00096">
    <property type="entry name" value="zf-C2H2"/>
    <property type="match status" value="3"/>
</dbReference>
<dbReference type="SMART" id="SM00355">
    <property type="entry name" value="ZnF_C2H2"/>
    <property type="match status" value="3"/>
</dbReference>
<dbReference type="SUPFAM" id="SSF57667">
    <property type="entry name" value="beta-beta-alpha zinc fingers"/>
    <property type="match status" value="2"/>
</dbReference>
<dbReference type="PROSITE" id="PS00028">
    <property type="entry name" value="ZINC_FINGER_C2H2_1"/>
    <property type="match status" value="3"/>
</dbReference>
<dbReference type="PROSITE" id="PS50157">
    <property type="entry name" value="ZINC_FINGER_C2H2_2"/>
    <property type="match status" value="3"/>
</dbReference>
<comment type="function">
    <text evidence="3">Transcription factor that binds to the CACCC box in the promoter of target genes such as HBB/beta globin or NOV and activates their transcription. Might be involved in transcriptional regulation by modulating the binding of the RARA nuclear receptor to RARE DNA elements (By similarity).</text>
</comment>
<comment type="subunit">
    <text evidence="2 3">Interacts with WWP1.</text>
</comment>
<comment type="subcellular location">
    <subcellularLocation>
        <location evidence="1">Nucleus</location>
    </subcellularLocation>
</comment>
<comment type="domain">
    <text evidence="3">The 9aaTAD motif is a transactivation domain present in a large number of yeast and animal transcription factors.</text>
</comment>
<comment type="PTM">
    <text evidence="1">Ubiquitinated. Polyubiquitination involves WWP1 and leads to proteasomal degradation of this protein (By similarity).</text>
</comment>
<comment type="similarity">
    <text evidence="6">Belongs to the krueppel C2H2-type zinc-finger protein family.</text>
</comment>
<gene>
    <name type="primary">Klf2</name>
    <name type="synonym">Lklf</name>
</gene>
<organism>
    <name type="scientific">Rattus norvegicus</name>
    <name type="common">Rat</name>
    <dbReference type="NCBI Taxonomy" id="10116"/>
    <lineage>
        <taxon>Eukaryota</taxon>
        <taxon>Metazoa</taxon>
        <taxon>Chordata</taxon>
        <taxon>Craniata</taxon>
        <taxon>Vertebrata</taxon>
        <taxon>Euteleostomi</taxon>
        <taxon>Mammalia</taxon>
        <taxon>Eutheria</taxon>
        <taxon>Euarchontoglires</taxon>
        <taxon>Glires</taxon>
        <taxon>Rodentia</taxon>
        <taxon>Myomorpha</taxon>
        <taxon>Muroidea</taxon>
        <taxon>Muridae</taxon>
        <taxon>Murinae</taxon>
        <taxon>Rattus</taxon>
    </lineage>
</organism>
<proteinExistence type="evidence at protein level"/>
<sequence>MALSEPILPSFATFASPCERGLQERWPRNEPEAGSTDEDLNSVLDFILSMGLDGLGAENPPEPPPQPPPPAFYYPEPGAPPPYGTPAAGLGTELLRPDLDAPQGPALHGRFLLAPPGRLVKAEPPEVDGGGYGCAAGLARGPRGLKLEGALGATGACMRGPAGRPPPPSDTPPLSPDGPPRLPAPGPRNPFPPPFGPGPSFGGPGPALHYGPPAPGAFGLFDDAAAALGLAPPATRGLLTPPSSPLELLEAKPKRGRRSWPRKRAATHTCSYTNCGKTYTKSSHLKAHLRTHTGEKPYHCNWDGCGWKFARSDELTRHYRKHTGHRPFQCHLCDRAFSRSDHLALHMKRHM</sequence>
<accession>Q9ET58</accession>
<protein>
    <recommendedName>
        <fullName>Krueppel-like factor 2</fullName>
    </recommendedName>
    <alternativeName>
        <fullName>Lung krueppel-like factor</fullName>
    </alternativeName>
</protein>
<reference key="1">
    <citation type="submission" date="1999-08" db="EMBL/GenBank/DDBJ databases">
        <title>The gene for the transcription factor LKLF is developmentally expressed in rat T cells and is not defective in lymphopenic diabetes-prone BB rats.</title>
        <authorList>
            <person name="Haag F."/>
            <person name="Bartels K."/>
            <person name="Rothenburg S."/>
            <person name="Stahmer I."/>
            <person name="Thiele H.-G."/>
            <person name="Koch-Nolte F."/>
        </authorList>
    </citation>
    <scope>NUCLEOTIDE SEQUENCE [GENOMIC DNA]</scope>
    <source>
        <strain>Brown Norway/SsNHsd</strain>
    </source>
</reference>
<reference key="2">
    <citation type="journal article" date="2012" name="Nat. Commun.">
        <title>Quantitative maps of protein phosphorylation sites across 14 different rat organs and tissues.</title>
        <authorList>
            <person name="Lundby A."/>
            <person name="Secher A."/>
            <person name="Lage K."/>
            <person name="Nordsborg N.B."/>
            <person name="Dmytriyev A."/>
            <person name="Lundby C."/>
            <person name="Olsen J.V."/>
        </authorList>
    </citation>
    <scope>PHOSPHORYLATION [LARGE SCALE ANALYSIS] AT THR-171 AND THR-240</scope>
    <scope>IDENTIFICATION BY MASS SPECTROMETRY [LARGE SCALE ANALYSIS]</scope>
</reference>
<keyword id="KW-0010">Activator</keyword>
<keyword id="KW-0238">DNA-binding</keyword>
<keyword id="KW-0479">Metal-binding</keyword>
<keyword id="KW-0539">Nucleus</keyword>
<keyword id="KW-0597">Phosphoprotein</keyword>
<keyword id="KW-1185">Reference proteome</keyword>
<keyword id="KW-0677">Repeat</keyword>
<keyword id="KW-0804">Transcription</keyword>
<keyword id="KW-0805">Transcription regulation</keyword>
<keyword id="KW-0832">Ubl conjugation</keyword>
<keyword id="KW-0862">Zinc</keyword>
<keyword id="KW-0863">Zinc-finger</keyword>
<evidence type="ECO:0000250" key="1"/>
<evidence type="ECO:0000250" key="2">
    <source>
        <dbReference type="UniProtKB" id="Q60843"/>
    </source>
</evidence>
<evidence type="ECO:0000250" key="3">
    <source>
        <dbReference type="UniProtKB" id="Q9Y5W3"/>
    </source>
</evidence>
<evidence type="ECO:0000255" key="4">
    <source>
        <dbReference type="PROSITE-ProRule" id="PRU00042"/>
    </source>
</evidence>
<evidence type="ECO:0000256" key="5">
    <source>
        <dbReference type="SAM" id="MobiDB-lite"/>
    </source>
</evidence>
<evidence type="ECO:0000305" key="6"/>
<evidence type="ECO:0007744" key="7">
    <source>
    </source>
</evidence>
<feature type="chain" id="PRO_0000047164" description="Krueppel-like factor 2">
    <location>
        <begin position="1"/>
        <end position="351"/>
    </location>
</feature>
<feature type="zinc finger region" description="C2H2-type 1" evidence="4">
    <location>
        <begin position="268"/>
        <end position="292"/>
    </location>
</feature>
<feature type="zinc finger region" description="C2H2-type 2" evidence="4">
    <location>
        <begin position="298"/>
        <end position="322"/>
    </location>
</feature>
<feature type="zinc finger region" description="C2H2-type 3" evidence="4">
    <location>
        <begin position="328"/>
        <end position="350"/>
    </location>
</feature>
<feature type="region of interest" description="Disordered" evidence="5">
    <location>
        <begin position="20"/>
        <end position="110"/>
    </location>
</feature>
<feature type="region of interest" description="Interaction with WWP1" evidence="1">
    <location>
        <begin position="110"/>
        <end position="264"/>
    </location>
</feature>
<feature type="region of interest" description="Disordered" evidence="5">
    <location>
        <begin position="156"/>
        <end position="209"/>
    </location>
</feature>
<feature type="short sequence motif" description="9aaTAD" evidence="3">
    <location>
        <begin position="42"/>
        <end position="50"/>
    </location>
</feature>
<feature type="compositionally biased region" description="Basic and acidic residues" evidence="5">
    <location>
        <begin position="21"/>
        <end position="31"/>
    </location>
</feature>
<feature type="compositionally biased region" description="Pro residues" evidence="5">
    <location>
        <begin position="60"/>
        <end position="84"/>
    </location>
</feature>
<feature type="compositionally biased region" description="Pro residues" evidence="5">
    <location>
        <begin position="163"/>
        <end position="197"/>
    </location>
</feature>
<feature type="modified residue" description="Phosphothreonine" evidence="7">
    <location>
        <position position="171"/>
    </location>
</feature>
<feature type="modified residue" description="Phosphothreonine" evidence="7">
    <location>
        <position position="240"/>
    </location>
</feature>
<feature type="modified residue" description="Phosphoserine" evidence="2">
    <location>
        <position position="243"/>
    </location>
</feature>
<name>KLF2_RAT</name>